<keyword id="KW-0687">Ribonucleoprotein</keyword>
<keyword id="KW-0689">Ribosomal protein</keyword>
<keyword id="KW-0694">RNA-binding</keyword>
<keyword id="KW-0699">rRNA-binding</keyword>
<keyword id="KW-0820">tRNA-binding</keyword>
<dbReference type="EMBL" id="CP001011">
    <property type="protein sequence ID" value="ACB91901.1"/>
    <property type="molecule type" value="Genomic_DNA"/>
</dbReference>
<dbReference type="RefSeq" id="WP_004090134.1">
    <property type="nucleotide sequence ID" value="NC_010577.1"/>
</dbReference>
<dbReference type="SMR" id="B2I8J0"/>
<dbReference type="GeneID" id="93904160"/>
<dbReference type="KEGG" id="xfn:XfasM23_0454"/>
<dbReference type="HOGENOM" id="CLU_103849_1_2_6"/>
<dbReference type="Proteomes" id="UP000001698">
    <property type="component" value="Chromosome"/>
</dbReference>
<dbReference type="GO" id="GO:0005829">
    <property type="term" value="C:cytosol"/>
    <property type="evidence" value="ECO:0007669"/>
    <property type="project" value="TreeGrafter"/>
</dbReference>
<dbReference type="GO" id="GO:0015935">
    <property type="term" value="C:small ribosomal subunit"/>
    <property type="evidence" value="ECO:0007669"/>
    <property type="project" value="TreeGrafter"/>
</dbReference>
<dbReference type="GO" id="GO:0019843">
    <property type="term" value="F:rRNA binding"/>
    <property type="evidence" value="ECO:0007669"/>
    <property type="project" value="UniProtKB-UniRule"/>
</dbReference>
<dbReference type="GO" id="GO:0003735">
    <property type="term" value="F:structural constituent of ribosome"/>
    <property type="evidence" value="ECO:0007669"/>
    <property type="project" value="InterPro"/>
</dbReference>
<dbReference type="GO" id="GO:0000049">
    <property type="term" value="F:tRNA binding"/>
    <property type="evidence" value="ECO:0007669"/>
    <property type="project" value="UniProtKB-UniRule"/>
</dbReference>
<dbReference type="GO" id="GO:0006412">
    <property type="term" value="P:translation"/>
    <property type="evidence" value="ECO:0007669"/>
    <property type="project" value="UniProtKB-UniRule"/>
</dbReference>
<dbReference type="FunFam" id="1.10.8.50:FF:000001">
    <property type="entry name" value="30S ribosomal protein S13"/>
    <property type="match status" value="1"/>
</dbReference>
<dbReference type="FunFam" id="4.10.910.10:FF:000001">
    <property type="entry name" value="30S ribosomal protein S13"/>
    <property type="match status" value="1"/>
</dbReference>
<dbReference type="Gene3D" id="1.10.8.50">
    <property type="match status" value="1"/>
</dbReference>
<dbReference type="Gene3D" id="4.10.910.10">
    <property type="entry name" value="30s ribosomal protein s13, domain 2"/>
    <property type="match status" value="1"/>
</dbReference>
<dbReference type="HAMAP" id="MF_01315">
    <property type="entry name" value="Ribosomal_uS13"/>
    <property type="match status" value="1"/>
</dbReference>
<dbReference type="InterPro" id="IPR027437">
    <property type="entry name" value="Rbsml_uS13_C"/>
</dbReference>
<dbReference type="InterPro" id="IPR001892">
    <property type="entry name" value="Ribosomal_uS13"/>
</dbReference>
<dbReference type="InterPro" id="IPR010979">
    <property type="entry name" value="Ribosomal_uS13-like_H2TH"/>
</dbReference>
<dbReference type="InterPro" id="IPR019980">
    <property type="entry name" value="Ribosomal_uS13_bac-type"/>
</dbReference>
<dbReference type="InterPro" id="IPR018269">
    <property type="entry name" value="Ribosomal_uS13_CS"/>
</dbReference>
<dbReference type="NCBIfam" id="TIGR03631">
    <property type="entry name" value="uS13_bact"/>
    <property type="match status" value="1"/>
</dbReference>
<dbReference type="PANTHER" id="PTHR10871">
    <property type="entry name" value="30S RIBOSOMAL PROTEIN S13/40S RIBOSOMAL PROTEIN S18"/>
    <property type="match status" value="1"/>
</dbReference>
<dbReference type="PANTHER" id="PTHR10871:SF1">
    <property type="entry name" value="SMALL RIBOSOMAL SUBUNIT PROTEIN US13M"/>
    <property type="match status" value="1"/>
</dbReference>
<dbReference type="Pfam" id="PF00416">
    <property type="entry name" value="Ribosomal_S13"/>
    <property type="match status" value="1"/>
</dbReference>
<dbReference type="PIRSF" id="PIRSF002134">
    <property type="entry name" value="Ribosomal_S13"/>
    <property type="match status" value="1"/>
</dbReference>
<dbReference type="SUPFAM" id="SSF46946">
    <property type="entry name" value="S13-like H2TH domain"/>
    <property type="match status" value="1"/>
</dbReference>
<dbReference type="PROSITE" id="PS00646">
    <property type="entry name" value="RIBOSOMAL_S13_1"/>
    <property type="match status" value="1"/>
</dbReference>
<dbReference type="PROSITE" id="PS50159">
    <property type="entry name" value="RIBOSOMAL_S13_2"/>
    <property type="match status" value="1"/>
</dbReference>
<proteinExistence type="inferred from homology"/>
<feature type="chain" id="PRO_1000141332" description="Small ribosomal subunit protein uS13">
    <location>
        <begin position="1"/>
        <end position="118"/>
    </location>
</feature>
<feature type="region of interest" description="Disordered" evidence="2">
    <location>
        <begin position="99"/>
        <end position="118"/>
    </location>
</feature>
<evidence type="ECO:0000255" key="1">
    <source>
        <dbReference type="HAMAP-Rule" id="MF_01315"/>
    </source>
</evidence>
<evidence type="ECO:0000256" key="2">
    <source>
        <dbReference type="SAM" id="MobiDB-lite"/>
    </source>
</evidence>
<evidence type="ECO:0000305" key="3"/>
<accession>B2I8J0</accession>
<comment type="function">
    <text evidence="1">Located at the top of the head of the 30S subunit, it contacts several helices of the 16S rRNA. In the 70S ribosome it contacts the 23S rRNA (bridge B1a) and protein L5 of the 50S subunit (bridge B1b), connecting the 2 subunits; these bridges are implicated in subunit movement. Contacts the tRNAs in the A and P-sites.</text>
</comment>
<comment type="subunit">
    <text evidence="1">Part of the 30S ribosomal subunit. Forms a loose heterodimer with protein S19. Forms two bridges to the 50S subunit in the 70S ribosome.</text>
</comment>
<comment type="similarity">
    <text evidence="1">Belongs to the universal ribosomal protein uS13 family.</text>
</comment>
<gene>
    <name evidence="1" type="primary">rpsM</name>
    <name type="ordered locus">XfasM23_0454</name>
</gene>
<organism>
    <name type="scientific">Xylella fastidiosa (strain M23)</name>
    <dbReference type="NCBI Taxonomy" id="405441"/>
    <lineage>
        <taxon>Bacteria</taxon>
        <taxon>Pseudomonadati</taxon>
        <taxon>Pseudomonadota</taxon>
        <taxon>Gammaproteobacteria</taxon>
        <taxon>Lysobacterales</taxon>
        <taxon>Lysobacteraceae</taxon>
        <taxon>Xylella</taxon>
    </lineage>
</organism>
<name>RS13_XYLF2</name>
<protein>
    <recommendedName>
        <fullName evidence="1">Small ribosomal subunit protein uS13</fullName>
    </recommendedName>
    <alternativeName>
        <fullName evidence="3">30S ribosomal protein S13</fullName>
    </alternativeName>
</protein>
<sequence>MARIAGVNLAIQKHVWIGLQSIYGIGRTRSRKVCDAANVAIYTKIRDLSESEIERLRVEVGKYVIEGDLRREVGMAIKRLMDLNCYRGLRHRRCLPLRGQRTRTNARTRKGPRKAIKK</sequence>
<reference key="1">
    <citation type="journal article" date="2010" name="J. Bacteriol.">
        <title>Whole genome sequences of two Xylella fastidiosa strains (M12 and M23) causing almond leaf scorch disease in California.</title>
        <authorList>
            <person name="Chen J."/>
            <person name="Xie G."/>
            <person name="Han S."/>
            <person name="Chertkov O."/>
            <person name="Sims D."/>
            <person name="Civerolo E.L."/>
        </authorList>
    </citation>
    <scope>NUCLEOTIDE SEQUENCE [LARGE SCALE GENOMIC DNA]</scope>
    <source>
        <strain>M23</strain>
    </source>
</reference>